<dbReference type="EMBL" id="AE006914">
    <property type="protein sequence ID" value="AAL03698.1"/>
    <property type="molecule type" value="Genomic_DNA"/>
</dbReference>
<dbReference type="PIR" id="H97844">
    <property type="entry name" value="H97844"/>
</dbReference>
<dbReference type="RefSeq" id="WP_010977731.1">
    <property type="nucleotide sequence ID" value="NC_003103.1"/>
</dbReference>
<dbReference type="SMR" id="Q92GG3"/>
<dbReference type="GeneID" id="928312"/>
<dbReference type="KEGG" id="rco:RC1160"/>
<dbReference type="PATRIC" id="fig|272944.4.peg.1334"/>
<dbReference type="HOGENOM" id="CLU_086034_6_2_5"/>
<dbReference type="Proteomes" id="UP000000816">
    <property type="component" value="Chromosome"/>
</dbReference>
<dbReference type="GO" id="GO:0033281">
    <property type="term" value="C:TAT protein transport complex"/>
    <property type="evidence" value="ECO:0007669"/>
    <property type="project" value="UniProtKB-UniRule"/>
</dbReference>
<dbReference type="GO" id="GO:0008320">
    <property type="term" value="F:protein transmembrane transporter activity"/>
    <property type="evidence" value="ECO:0007669"/>
    <property type="project" value="UniProtKB-UniRule"/>
</dbReference>
<dbReference type="GO" id="GO:0043953">
    <property type="term" value="P:protein transport by the Tat complex"/>
    <property type="evidence" value="ECO:0007669"/>
    <property type="project" value="UniProtKB-UniRule"/>
</dbReference>
<dbReference type="Gene3D" id="1.20.5.3310">
    <property type="match status" value="1"/>
</dbReference>
<dbReference type="HAMAP" id="MF_00236">
    <property type="entry name" value="TatA_E"/>
    <property type="match status" value="1"/>
</dbReference>
<dbReference type="InterPro" id="IPR003369">
    <property type="entry name" value="TatA/B/E"/>
</dbReference>
<dbReference type="InterPro" id="IPR006312">
    <property type="entry name" value="TatA/E"/>
</dbReference>
<dbReference type="NCBIfam" id="NF002402">
    <property type="entry name" value="PRK01470.1"/>
    <property type="match status" value="1"/>
</dbReference>
<dbReference type="NCBIfam" id="TIGR01411">
    <property type="entry name" value="tatAE"/>
    <property type="match status" value="1"/>
</dbReference>
<dbReference type="PANTHER" id="PTHR42982">
    <property type="entry name" value="SEC-INDEPENDENT PROTEIN TRANSLOCASE PROTEIN TATA"/>
    <property type="match status" value="1"/>
</dbReference>
<dbReference type="PANTHER" id="PTHR42982:SF1">
    <property type="entry name" value="SEC-INDEPENDENT PROTEIN TRANSLOCASE PROTEIN TATA"/>
    <property type="match status" value="1"/>
</dbReference>
<dbReference type="Pfam" id="PF02416">
    <property type="entry name" value="TatA_B_E"/>
    <property type="match status" value="1"/>
</dbReference>
<sequence length="53" mass="5722">MGMSLSHLLIVLLIIFVLFGAGKLPQVMSDLAKGLKAFKDGMKDDGSDNDKNK</sequence>
<protein>
    <recommendedName>
        <fullName evidence="1">Sec-independent protein translocase protein TatA</fullName>
    </recommendedName>
</protein>
<gene>
    <name evidence="1" type="primary">tatA</name>
    <name type="ordered locus">RC1160</name>
</gene>
<comment type="function">
    <text evidence="1">Part of the twin-arginine translocation (Tat) system that transports large folded proteins containing a characteristic twin-arginine motif in their signal peptide across membranes. TatA could form the protein-conducting channel of the Tat system.</text>
</comment>
<comment type="subunit">
    <text evidence="1">The Tat system comprises two distinct complexes: a TatABC complex, containing multiple copies of TatA, TatB and TatC subunits, and a separate TatA complex, containing only TatA subunits. Substrates initially bind to the TatABC complex, which probably triggers association of the separate TatA complex to form the active translocon.</text>
</comment>
<comment type="subcellular location">
    <subcellularLocation>
        <location evidence="1">Cell inner membrane</location>
        <topology evidence="1">Single-pass membrane protein</topology>
    </subcellularLocation>
</comment>
<comment type="similarity">
    <text evidence="1">Belongs to the TatA/E family.</text>
</comment>
<reference key="1">
    <citation type="journal article" date="2001" name="Science">
        <title>Mechanisms of evolution in Rickettsia conorii and R. prowazekii.</title>
        <authorList>
            <person name="Ogata H."/>
            <person name="Audic S."/>
            <person name="Renesto-Audiffren P."/>
            <person name="Fournier P.-E."/>
            <person name="Barbe V."/>
            <person name="Samson D."/>
            <person name="Roux V."/>
            <person name="Cossart P."/>
            <person name="Weissenbach J."/>
            <person name="Claverie J.-M."/>
            <person name="Raoult D."/>
        </authorList>
    </citation>
    <scope>NUCLEOTIDE SEQUENCE [LARGE SCALE GENOMIC DNA]</scope>
    <source>
        <strain>ATCC VR-613 / Malish 7</strain>
    </source>
</reference>
<accession>Q92GG3</accession>
<feature type="chain" id="PRO_0000097956" description="Sec-independent protein translocase protein TatA">
    <location>
        <begin position="1"/>
        <end position="53"/>
    </location>
</feature>
<feature type="transmembrane region" description="Helical" evidence="1">
    <location>
        <begin position="1"/>
        <end position="21"/>
    </location>
</feature>
<organism>
    <name type="scientific">Rickettsia conorii (strain ATCC VR-613 / Malish 7)</name>
    <dbReference type="NCBI Taxonomy" id="272944"/>
    <lineage>
        <taxon>Bacteria</taxon>
        <taxon>Pseudomonadati</taxon>
        <taxon>Pseudomonadota</taxon>
        <taxon>Alphaproteobacteria</taxon>
        <taxon>Rickettsiales</taxon>
        <taxon>Rickettsiaceae</taxon>
        <taxon>Rickettsieae</taxon>
        <taxon>Rickettsia</taxon>
        <taxon>spotted fever group</taxon>
    </lineage>
</organism>
<keyword id="KW-0997">Cell inner membrane</keyword>
<keyword id="KW-1003">Cell membrane</keyword>
<keyword id="KW-0472">Membrane</keyword>
<keyword id="KW-0653">Protein transport</keyword>
<keyword id="KW-0811">Translocation</keyword>
<keyword id="KW-0812">Transmembrane</keyword>
<keyword id="KW-1133">Transmembrane helix</keyword>
<keyword id="KW-0813">Transport</keyword>
<evidence type="ECO:0000255" key="1">
    <source>
        <dbReference type="HAMAP-Rule" id="MF_00236"/>
    </source>
</evidence>
<name>TATA_RICCN</name>
<proteinExistence type="inferred from homology"/>